<organism>
    <name type="scientific">Rhodopseudomonas palustris (strain HaA2)</name>
    <dbReference type="NCBI Taxonomy" id="316058"/>
    <lineage>
        <taxon>Bacteria</taxon>
        <taxon>Pseudomonadati</taxon>
        <taxon>Pseudomonadota</taxon>
        <taxon>Alphaproteobacteria</taxon>
        <taxon>Hyphomicrobiales</taxon>
        <taxon>Nitrobacteraceae</taxon>
        <taxon>Rhodopseudomonas</taxon>
    </lineage>
</organism>
<name>RS17_RHOP2</name>
<sequence>MPKRTLQGVVVSDKQAKTVVVRVDRRFTHPIYKKTIRRSKNYHAHDENDQFHPGDMVWIEESKPISKLKRWTVVRGEPKKTA</sequence>
<accession>Q2IXQ1</accession>
<reference key="1">
    <citation type="submission" date="2006-01" db="EMBL/GenBank/DDBJ databases">
        <title>Complete sequence of Rhodopseudomonas palustris HaA2.</title>
        <authorList>
            <consortium name="US DOE Joint Genome Institute"/>
            <person name="Copeland A."/>
            <person name="Lucas S."/>
            <person name="Lapidus A."/>
            <person name="Barry K."/>
            <person name="Detter J.C."/>
            <person name="Glavina T."/>
            <person name="Hammon N."/>
            <person name="Israni S."/>
            <person name="Pitluck S."/>
            <person name="Chain P."/>
            <person name="Malfatti S."/>
            <person name="Shin M."/>
            <person name="Vergez L."/>
            <person name="Schmutz J."/>
            <person name="Larimer F."/>
            <person name="Land M."/>
            <person name="Hauser L."/>
            <person name="Pelletier D.A."/>
            <person name="Kyrpides N."/>
            <person name="Anderson I."/>
            <person name="Oda Y."/>
            <person name="Harwood C.S."/>
            <person name="Richardson P."/>
        </authorList>
    </citation>
    <scope>NUCLEOTIDE SEQUENCE [LARGE SCALE GENOMIC DNA]</scope>
    <source>
        <strain>HaA2</strain>
    </source>
</reference>
<protein>
    <recommendedName>
        <fullName evidence="1">Small ribosomal subunit protein uS17</fullName>
    </recommendedName>
    <alternativeName>
        <fullName evidence="2">30S ribosomal protein S17</fullName>
    </alternativeName>
</protein>
<gene>
    <name evidence="1" type="primary">rpsQ</name>
    <name type="ordered locus">RPB_2304</name>
</gene>
<dbReference type="EMBL" id="CP000250">
    <property type="protein sequence ID" value="ABD07009.1"/>
    <property type="molecule type" value="Genomic_DNA"/>
</dbReference>
<dbReference type="RefSeq" id="WP_011441194.1">
    <property type="nucleotide sequence ID" value="NC_007778.1"/>
</dbReference>
<dbReference type="SMR" id="Q2IXQ1"/>
<dbReference type="STRING" id="316058.RPB_2304"/>
<dbReference type="KEGG" id="rpb:RPB_2304"/>
<dbReference type="eggNOG" id="COG0186">
    <property type="taxonomic scope" value="Bacteria"/>
</dbReference>
<dbReference type="HOGENOM" id="CLU_073626_1_1_5"/>
<dbReference type="OrthoDB" id="9811714at2"/>
<dbReference type="Proteomes" id="UP000008809">
    <property type="component" value="Chromosome"/>
</dbReference>
<dbReference type="GO" id="GO:0022627">
    <property type="term" value="C:cytosolic small ribosomal subunit"/>
    <property type="evidence" value="ECO:0007669"/>
    <property type="project" value="TreeGrafter"/>
</dbReference>
<dbReference type="GO" id="GO:0019843">
    <property type="term" value="F:rRNA binding"/>
    <property type="evidence" value="ECO:0007669"/>
    <property type="project" value="UniProtKB-UniRule"/>
</dbReference>
<dbReference type="GO" id="GO:0003735">
    <property type="term" value="F:structural constituent of ribosome"/>
    <property type="evidence" value="ECO:0007669"/>
    <property type="project" value="InterPro"/>
</dbReference>
<dbReference type="GO" id="GO:0006412">
    <property type="term" value="P:translation"/>
    <property type="evidence" value="ECO:0007669"/>
    <property type="project" value="UniProtKB-UniRule"/>
</dbReference>
<dbReference type="CDD" id="cd00364">
    <property type="entry name" value="Ribosomal_uS17"/>
    <property type="match status" value="1"/>
</dbReference>
<dbReference type="FunFam" id="2.40.50.140:FF:000204">
    <property type="entry name" value="30S ribosomal protein S17"/>
    <property type="match status" value="1"/>
</dbReference>
<dbReference type="Gene3D" id="2.40.50.140">
    <property type="entry name" value="Nucleic acid-binding proteins"/>
    <property type="match status" value="1"/>
</dbReference>
<dbReference type="HAMAP" id="MF_01345_B">
    <property type="entry name" value="Ribosomal_uS17_B"/>
    <property type="match status" value="1"/>
</dbReference>
<dbReference type="InterPro" id="IPR012340">
    <property type="entry name" value="NA-bd_OB-fold"/>
</dbReference>
<dbReference type="InterPro" id="IPR000266">
    <property type="entry name" value="Ribosomal_uS17"/>
</dbReference>
<dbReference type="InterPro" id="IPR019984">
    <property type="entry name" value="Ribosomal_uS17_bact/chlr"/>
</dbReference>
<dbReference type="InterPro" id="IPR019979">
    <property type="entry name" value="Ribosomal_uS17_CS"/>
</dbReference>
<dbReference type="NCBIfam" id="NF004123">
    <property type="entry name" value="PRK05610.1"/>
    <property type="match status" value="1"/>
</dbReference>
<dbReference type="NCBIfam" id="TIGR03635">
    <property type="entry name" value="uS17_bact"/>
    <property type="match status" value="1"/>
</dbReference>
<dbReference type="PANTHER" id="PTHR10744">
    <property type="entry name" value="40S RIBOSOMAL PROTEIN S11 FAMILY MEMBER"/>
    <property type="match status" value="1"/>
</dbReference>
<dbReference type="PANTHER" id="PTHR10744:SF1">
    <property type="entry name" value="SMALL RIBOSOMAL SUBUNIT PROTEIN US17M"/>
    <property type="match status" value="1"/>
</dbReference>
<dbReference type="Pfam" id="PF00366">
    <property type="entry name" value="Ribosomal_S17"/>
    <property type="match status" value="1"/>
</dbReference>
<dbReference type="PRINTS" id="PR00973">
    <property type="entry name" value="RIBOSOMALS17"/>
</dbReference>
<dbReference type="SUPFAM" id="SSF50249">
    <property type="entry name" value="Nucleic acid-binding proteins"/>
    <property type="match status" value="1"/>
</dbReference>
<dbReference type="PROSITE" id="PS00056">
    <property type="entry name" value="RIBOSOMAL_S17"/>
    <property type="match status" value="1"/>
</dbReference>
<proteinExistence type="inferred from homology"/>
<evidence type="ECO:0000255" key="1">
    <source>
        <dbReference type="HAMAP-Rule" id="MF_01345"/>
    </source>
</evidence>
<evidence type="ECO:0000305" key="2"/>
<feature type="chain" id="PRO_0000255696" description="Small ribosomal subunit protein uS17">
    <location>
        <begin position="1"/>
        <end position="82"/>
    </location>
</feature>
<keyword id="KW-1185">Reference proteome</keyword>
<keyword id="KW-0687">Ribonucleoprotein</keyword>
<keyword id="KW-0689">Ribosomal protein</keyword>
<keyword id="KW-0694">RNA-binding</keyword>
<keyword id="KW-0699">rRNA-binding</keyword>
<comment type="function">
    <text evidence="1">One of the primary rRNA binding proteins, it binds specifically to the 5'-end of 16S ribosomal RNA.</text>
</comment>
<comment type="subunit">
    <text evidence="1">Part of the 30S ribosomal subunit.</text>
</comment>
<comment type="similarity">
    <text evidence="1">Belongs to the universal ribosomal protein uS17 family.</text>
</comment>